<dbReference type="EC" id="1.16.1.1" evidence="1"/>
<dbReference type="EMBL" id="AF213017">
    <property type="protein sequence ID" value="AAA19682.1"/>
    <property type="molecule type" value="Genomic_DNA"/>
</dbReference>
<dbReference type="RefSeq" id="WP_004644736.1">
    <property type="nucleotide sequence ID" value="NZ_MOSW01000200.1"/>
</dbReference>
<dbReference type="SMR" id="Q52109"/>
<dbReference type="GO" id="GO:0050660">
    <property type="term" value="F:flavin adenine dinucleotide binding"/>
    <property type="evidence" value="ECO:0007669"/>
    <property type="project" value="InterPro"/>
</dbReference>
<dbReference type="GO" id="GO:0016152">
    <property type="term" value="F:mercury (II) reductase (NADP+) activity"/>
    <property type="evidence" value="ECO:0007669"/>
    <property type="project" value="UniProtKB-EC"/>
</dbReference>
<dbReference type="GO" id="GO:0045340">
    <property type="term" value="F:mercury ion binding"/>
    <property type="evidence" value="ECO:0007669"/>
    <property type="project" value="InterPro"/>
</dbReference>
<dbReference type="GO" id="GO:0003955">
    <property type="term" value="F:NAD(P)H dehydrogenase (quinone) activity"/>
    <property type="evidence" value="ECO:0007669"/>
    <property type="project" value="TreeGrafter"/>
</dbReference>
<dbReference type="GO" id="GO:0050661">
    <property type="term" value="F:NADP binding"/>
    <property type="evidence" value="ECO:0007669"/>
    <property type="project" value="InterPro"/>
</dbReference>
<dbReference type="GO" id="GO:0016668">
    <property type="term" value="F:oxidoreductase activity, acting on a sulfur group of donors, NAD(P) as acceptor"/>
    <property type="evidence" value="ECO:0007669"/>
    <property type="project" value="InterPro"/>
</dbReference>
<dbReference type="GO" id="GO:0050787">
    <property type="term" value="P:detoxification of mercury ion"/>
    <property type="evidence" value="ECO:0007669"/>
    <property type="project" value="InterPro"/>
</dbReference>
<dbReference type="CDD" id="cd00371">
    <property type="entry name" value="HMA"/>
    <property type="match status" value="1"/>
</dbReference>
<dbReference type="FunFam" id="3.30.390.30:FF:000001">
    <property type="entry name" value="Dihydrolipoyl dehydrogenase"/>
    <property type="match status" value="1"/>
</dbReference>
<dbReference type="Gene3D" id="3.30.390.30">
    <property type="match status" value="1"/>
</dbReference>
<dbReference type="Gene3D" id="3.30.70.100">
    <property type="match status" value="1"/>
</dbReference>
<dbReference type="Gene3D" id="3.50.50.60">
    <property type="entry name" value="FAD/NAD(P)-binding domain"/>
    <property type="match status" value="2"/>
</dbReference>
<dbReference type="InterPro" id="IPR036188">
    <property type="entry name" value="FAD/NAD-bd_sf"/>
</dbReference>
<dbReference type="InterPro" id="IPR023753">
    <property type="entry name" value="FAD/NAD-binding_dom"/>
</dbReference>
<dbReference type="InterPro" id="IPR016156">
    <property type="entry name" value="FAD/NAD-linked_Rdtase_dimer_sf"/>
</dbReference>
<dbReference type="InterPro" id="IPR017969">
    <property type="entry name" value="Heavy-metal-associated_CS"/>
</dbReference>
<dbReference type="InterPro" id="IPR006121">
    <property type="entry name" value="HMA_dom"/>
</dbReference>
<dbReference type="InterPro" id="IPR036163">
    <property type="entry name" value="HMA_dom_sf"/>
</dbReference>
<dbReference type="InterPro" id="IPR021179">
    <property type="entry name" value="Mercury_reductase_MerA"/>
</dbReference>
<dbReference type="InterPro" id="IPR001100">
    <property type="entry name" value="Pyr_nuc-diS_OxRdtase"/>
</dbReference>
<dbReference type="InterPro" id="IPR004099">
    <property type="entry name" value="Pyr_nucl-diS_OxRdtase_dimer"/>
</dbReference>
<dbReference type="InterPro" id="IPR012999">
    <property type="entry name" value="Pyr_OxRdtase_I_AS"/>
</dbReference>
<dbReference type="NCBIfam" id="TIGR02053">
    <property type="entry name" value="MerA"/>
    <property type="match status" value="1"/>
</dbReference>
<dbReference type="NCBIfam" id="NF010311">
    <property type="entry name" value="PRK13748.1"/>
    <property type="match status" value="1"/>
</dbReference>
<dbReference type="PANTHER" id="PTHR43014">
    <property type="entry name" value="MERCURIC REDUCTASE"/>
    <property type="match status" value="1"/>
</dbReference>
<dbReference type="PANTHER" id="PTHR43014:SF2">
    <property type="entry name" value="MERCURIC REDUCTASE"/>
    <property type="match status" value="1"/>
</dbReference>
<dbReference type="Pfam" id="PF00403">
    <property type="entry name" value="HMA"/>
    <property type="match status" value="1"/>
</dbReference>
<dbReference type="Pfam" id="PF07992">
    <property type="entry name" value="Pyr_redox_2"/>
    <property type="match status" value="1"/>
</dbReference>
<dbReference type="Pfam" id="PF02852">
    <property type="entry name" value="Pyr_redox_dim"/>
    <property type="match status" value="1"/>
</dbReference>
<dbReference type="PIRSF" id="PIRSF000350">
    <property type="entry name" value="Mercury_reductase_MerA"/>
    <property type="match status" value="1"/>
</dbReference>
<dbReference type="PRINTS" id="PR00945">
    <property type="entry name" value="HGRDTASE"/>
</dbReference>
<dbReference type="SUPFAM" id="SSF51905">
    <property type="entry name" value="FAD/NAD(P)-binding domain"/>
    <property type="match status" value="1"/>
</dbReference>
<dbReference type="SUPFAM" id="SSF55424">
    <property type="entry name" value="FAD/NAD-linked reductases, dimerisation (C-terminal) domain"/>
    <property type="match status" value="1"/>
</dbReference>
<dbReference type="SUPFAM" id="SSF55008">
    <property type="entry name" value="HMA, heavy metal-associated domain"/>
    <property type="match status" value="1"/>
</dbReference>
<dbReference type="PROSITE" id="PS01047">
    <property type="entry name" value="HMA_1"/>
    <property type="match status" value="1"/>
</dbReference>
<dbReference type="PROSITE" id="PS50846">
    <property type="entry name" value="HMA_2"/>
    <property type="match status" value="1"/>
</dbReference>
<dbReference type="PROSITE" id="PS00076">
    <property type="entry name" value="PYRIDINE_REDOX_1"/>
    <property type="match status" value="1"/>
</dbReference>
<proteinExistence type="inferred from homology"/>
<geneLocation type="plasmid">
    <name>pKLH2</name>
</geneLocation>
<protein>
    <recommendedName>
        <fullName>Mercuric reductase</fullName>
        <ecNumber evidence="1">1.16.1.1</ecNumber>
    </recommendedName>
    <alternativeName>
        <fullName>Hg(II) reductase</fullName>
    </alternativeName>
</protein>
<reference key="1">
    <citation type="journal article" date="1993" name="Plasmid">
        <title>Molecular characterization of an aberrant mercury resistance transposable element from an environmental Acinetobacter strain.</title>
        <authorList>
            <person name="Kholodii G.Y."/>
            <person name="Lomovskaya O.L."/>
            <person name="Gorlenko Z.M."/>
            <person name="Mindlin S.Z."/>
            <person name="Yurieva O.V."/>
            <person name="Nikiforov V.G."/>
        </authorList>
    </citation>
    <scope>NUCLEOTIDE SEQUENCE [GENOMIC DNA]</scope>
</reference>
<keyword id="KW-1015">Disulfide bond</keyword>
<keyword id="KW-0274">FAD</keyword>
<keyword id="KW-0285">Flavoprotein</keyword>
<keyword id="KW-0475">Mercuric resistance</keyword>
<keyword id="KW-0476">Mercury</keyword>
<keyword id="KW-0479">Metal-binding</keyword>
<keyword id="KW-0521">NADP</keyword>
<keyword id="KW-0560">Oxidoreductase</keyword>
<keyword id="KW-0614">Plasmid</keyword>
<keyword id="KW-0676">Redox-active center</keyword>
<comment type="function">
    <text evidence="1">Resistance to Hg(2+) in bacteria appears to be governed by a specialized system which includes mercuric reductase. MerA protein is responsible for volatilizing mercury as Hg(0).</text>
</comment>
<comment type="catalytic activity">
    <reaction evidence="1">
        <text>Hg + NADP(+) + H(+) = Hg(2+) + NADPH</text>
        <dbReference type="Rhea" id="RHEA:23856"/>
        <dbReference type="ChEBI" id="CHEBI:15378"/>
        <dbReference type="ChEBI" id="CHEBI:16170"/>
        <dbReference type="ChEBI" id="CHEBI:16793"/>
        <dbReference type="ChEBI" id="CHEBI:57783"/>
        <dbReference type="ChEBI" id="CHEBI:58349"/>
        <dbReference type="EC" id="1.16.1.1"/>
    </reaction>
</comment>
<comment type="cofactor">
    <cofactor evidence="1">
        <name>FAD</name>
        <dbReference type="ChEBI" id="CHEBI:57692"/>
    </cofactor>
    <text evidence="1">Binds 1 FAD per subunit.</text>
</comment>
<comment type="subunit">
    <text evidence="1">Homodimer.</text>
</comment>
<comment type="miscellaneous">
    <text evidence="1">The active site is a redox-active disulfide bond.</text>
</comment>
<comment type="similarity">
    <text evidence="3">Belongs to the class-I pyridine nucleotide-disulfide oxidoreductase family.</text>
</comment>
<gene>
    <name type="primary">merA</name>
</gene>
<feature type="chain" id="PRO_0000067993" description="Mercuric reductase">
    <location>
        <begin position="1"/>
        <end position="561"/>
    </location>
</feature>
<feature type="domain" description="HMA" evidence="2">
    <location>
        <begin position="1"/>
        <end position="65"/>
    </location>
</feature>
<feature type="binding site" evidence="2">
    <location>
        <position position="11"/>
    </location>
    <ligand>
        <name>a metal cation</name>
        <dbReference type="ChEBI" id="CHEBI:25213"/>
    </ligand>
</feature>
<feature type="binding site" evidence="2">
    <location>
        <position position="14"/>
    </location>
    <ligand>
        <name>a metal cation</name>
        <dbReference type="ChEBI" id="CHEBI:25213"/>
    </ligand>
</feature>
<feature type="binding site" evidence="1">
    <location>
        <position position="110"/>
    </location>
    <ligand>
        <name>FAD</name>
        <dbReference type="ChEBI" id="CHEBI:57692"/>
    </ligand>
</feature>
<feature type="binding site" evidence="1">
    <location>
        <position position="130"/>
    </location>
    <ligand>
        <name>FAD</name>
        <dbReference type="ChEBI" id="CHEBI:57692"/>
    </ligand>
</feature>
<feature type="binding site" evidence="1">
    <location>
        <position position="135"/>
    </location>
    <ligand>
        <name>FAD</name>
        <dbReference type="ChEBI" id="CHEBI:57692"/>
    </ligand>
</feature>
<feature type="binding site" evidence="1">
    <location>
        <position position="145"/>
    </location>
    <ligand>
        <name>FAD</name>
        <dbReference type="ChEBI" id="CHEBI:57692"/>
    </ligand>
</feature>
<feature type="binding site" evidence="1">
    <location>
        <position position="211"/>
    </location>
    <ligand>
        <name>FAD</name>
        <dbReference type="ChEBI" id="CHEBI:57692"/>
    </ligand>
</feature>
<feature type="binding site" evidence="1">
    <location>
        <position position="403"/>
    </location>
    <ligand>
        <name>FAD</name>
        <dbReference type="ChEBI" id="CHEBI:57692"/>
    </ligand>
</feature>
<feature type="binding site" evidence="1">
    <location>
        <position position="411"/>
    </location>
    <ligand>
        <name>FAD</name>
        <dbReference type="ChEBI" id="CHEBI:57692"/>
    </ligand>
</feature>
<feature type="binding site" evidence="1">
    <location>
        <position position="558"/>
    </location>
    <ligand>
        <name>Hg(2+)</name>
        <dbReference type="ChEBI" id="CHEBI:16793"/>
    </ligand>
</feature>
<feature type="binding site" evidence="1">
    <location>
        <position position="559"/>
    </location>
    <ligand>
        <name>Hg(2+)</name>
        <dbReference type="ChEBI" id="CHEBI:16793"/>
    </ligand>
</feature>
<feature type="disulfide bond" description="Redox-active" evidence="1">
    <location>
        <begin position="136"/>
        <end position="141"/>
    </location>
</feature>
<name>MERA_ACICA</name>
<sequence>MTTLKITGMTCDSCAAHVKEALEKVPGVQSALVSYPKGTAQLAIEAGTSSDALTTAVAGLGYEATLADAPPTDNRAGLLDKMRGWIGAADKPSGNERPLQVVVIGSGGAAMAAALKAVEQGAHVSLIERGTIGGTCVNVGCVPSKIMIRAAHIAHLRRESPFDGGIAATVPAIDRSKLLAQQQARVEELRHAKYEGILDGNPAITVVHGEARFKDEQSLVVRLNDGGERVVAFDRCLVATGASPAVPPIPGLKESPYWTSTEALVSDTLPERLAVIGSSVVALELAQAFARLGSQVTILARNTLFFRDDPAIGEAVTAAFRAEGIKVLEHTQASQVAHVDGEFVLTTGYGEIRADQLLVATGRAPNTRSLALEAAGVAANAQGAIVIDKGMRTSTPHIYAAGDCTDQPQFVYVAAAAGTRAAINMTGGDAALDLTAMPAVVFTDPQVATVGYSEAEAHHDGIETDSRTLTLDNVPRALANFDTRGFIKLVIEEGSGRLIGVQAVAPEAGELIQTAVLAIRNRMTVQELADQLFPYLTMVEGLKLAAQTFSKDVKQLSCCAG</sequence>
<organism>
    <name type="scientific">Acinetobacter calcoaceticus</name>
    <dbReference type="NCBI Taxonomy" id="471"/>
    <lineage>
        <taxon>Bacteria</taxon>
        <taxon>Pseudomonadati</taxon>
        <taxon>Pseudomonadota</taxon>
        <taxon>Gammaproteobacteria</taxon>
        <taxon>Moraxellales</taxon>
        <taxon>Moraxellaceae</taxon>
        <taxon>Acinetobacter</taxon>
        <taxon>Acinetobacter calcoaceticus/baumannii complex</taxon>
    </lineage>
</organism>
<accession>Q52109</accession>
<evidence type="ECO:0000250" key="1">
    <source>
        <dbReference type="UniProtKB" id="P00392"/>
    </source>
</evidence>
<evidence type="ECO:0000255" key="2">
    <source>
        <dbReference type="PROSITE-ProRule" id="PRU00280"/>
    </source>
</evidence>
<evidence type="ECO:0000305" key="3"/>